<protein>
    <recommendedName>
        <fullName evidence="1">Peptide chain release factor 1</fullName>
        <shortName evidence="1">RF-1</shortName>
    </recommendedName>
</protein>
<keyword id="KW-0963">Cytoplasm</keyword>
<keyword id="KW-0488">Methylation</keyword>
<keyword id="KW-0648">Protein biosynthesis</keyword>
<comment type="function">
    <text evidence="1">Peptide chain release factor 1 directs the termination of translation in response to the peptide chain termination codons UAG and UAA.</text>
</comment>
<comment type="subcellular location">
    <subcellularLocation>
        <location evidence="1">Cytoplasm</location>
    </subcellularLocation>
</comment>
<comment type="PTM">
    <text evidence="1">Methylated by PrmC. Methylation increases the termination efficiency of RF1.</text>
</comment>
<comment type="similarity">
    <text evidence="1">Belongs to the prokaryotic/mitochondrial release factor family.</text>
</comment>
<feature type="chain" id="PRO_0000177626" description="Peptide chain release factor 1">
    <location>
        <begin position="1"/>
        <end position="355"/>
    </location>
</feature>
<feature type="modified residue" description="N5-methylglutamine" evidence="1">
    <location>
        <position position="233"/>
    </location>
</feature>
<organism>
    <name type="scientific">Bacillus cereus (strain ATCC 10987 / NRS 248)</name>
    <dbReference type="NCBI Taxonomy" id="222523"/>
    <lineage>
        <taxon>Bacteria</taxon>
        <taxon>Bacillati</taxon>
        <taxon>Bacillota</taxon>
        <taxon>Bacilli</taxon>
        <taxon>Bacillales</taxon>
        <taxon>Bacillaceae</taxon>
        <taxon>Bacillus</taxon>
        <taxon>Bacillus cereus group</taxon>
    </lineage>
</organism>
<gene>
    <name evidence="1" type="primary">prfA</name>
    <name type="ordered locus">BCE_5456</name>
</gene>
<dbReference type="EMBL" id="AE017194">
    <property type="protein sequence ID" value="AAS44356.1"/>
    <property type="molecule type" value="Genomic_DNA"/>
</dbReference>
<dbReference type="SMR" id="Q72XC2"/>
<dbReference type="KEGG" id="bca:BCE_5456"/>
<dbReference type="HOGENOM" id="CLU_036856_0_1_9"/>
<dbReference type="Proteomes" id="UP000002527">
    <property type="component" value="Chromosome"/>
</dbReference>
<dbReference type="GO" id="GO:0005737">
    <property type="term" value="C:cytoplasm"/>
    <property type="evidence" value="ECO:0007669"/>
    <property type="project" value="UniProtKB-SubCell"/>
</dbReference>
<dbReference type="GO" id="GO:0016149">
    <property type="term" value="F:translation release factor activity, codon specific"/>
    <property type="evidence" value="ECO:0007669"/>
    <property type="project" value="UniProtKB-UniRule"/>
</dbReference>
<dbReference type="FunFam" id="3.30.160.20:FF:000004">
    <property type="entry name" value="Peptide chain release factor 1"/>
    <property type="match status" value="1"/>
</dbReference>
<dbReference type="FunFam" id="3.30.70.1660:FF:000002">
    <property type="entry name" value="Peptide chain release factor 1"/>
    <property type="match status" value="1"/>
</dbReference>
<dbReference type="FunFam" id="3.30.70.1660:FF:000004">
    <property type="entry name" value="Peptide chain release factor 1"/>
    <property type="match status" value="1"/>
</dbReference>
<dbReference type="Gene3D" id="3.30.160.20">
    <property type="match status" value="1"/>
</dbReference>
<dbReference type="Gene3D" id="3.30.70.1660">
    <property type="match status" value="1"/>
</dbReference>
<dbReference type="Gene3D" id="6.10.140.1950">
    <property type="match status" value="1"/>
</dbReference>
<dbReference type="HAMAP" id="MF_00093">
    <property type="entry name" value="Rel_fac_1"/>
    <property type="match status" value="1"/>
</dbReference>
<dbReference type="InterPro" id="IPR005139">
    <property type="entry name" value="PCRF"/>
</dbReference>
<dbReference type="InterPro" id="IPR000352">
    <property type="entry name" value="Pep_chain_release_fac_I"/>
</dbReference>
<dbReference type="InterPro" id="IPR045853">
    <property type="entry name" value="Pep_chain_release_fac_I_sf"/>
</dbReference>
<dbReference type="InterPro" id="IPR050057">
    <property type="entry name" value="Prokaryotic/Mito_RF"/>
</dbReference>
<dbReference type="InterPro" id="IPR004373">
    <property type="entry name" value="RF-1"/>
</dbReference>
<dbReference type="NCBIfam" id="TIGR00019">
    <property type="entry name" value="prfA"/>
    <property type="match status" value="1"/>
</dbReference>
<dbReference type="NCBIfam" id="NF001859">
    <property type="entry name" value="PRK00591.1"/>
    <property type="match status" value="1"/>
</dbReference>
<dbReference type="PANTHER" id="PTHR43804">
    <property type="entry name" value="LD18447P"/>
    <property type="match status" value="1"/>
</dbReference>
<dbReference type="PANTHER" id="PTHR43804:SF7">
    <property type="entry name" value="LD18447P"/>
    <property type="match status" value="1"/>
</dbReference>
<dbReference type="Pfam" id="PF03462">
    <property type="entry name" value="PCRF"/>
    <property type="match status" value="1"/>
</dbReference>
<dbReference type="Pfam" id="PF00472">
    <property type="entry name" value="RF-1"/>
    <property type="match status" value="1"/>
</dbReference>
<dbReference type="SMART" id="SM00937">
    <property type="entry name" value="PCRF"/>
    <property type="match status" value="1"/>
</dbReference>
<dbReference type="SUPFAM" id="SSF75620">
    <property type="entry name" value="Release factor"/>
    <property type="match status" value="1"/>
</dbReference>
<dbReference type="PROSITE" id="PS00745">
    <property type="entry name" value="RF_PROK_I"/>
    <property type="match status" value="1"/>
</dbReference>
<accession>Q72XC2</accession>
<proteinExistence type="inferred from homology"/>
<name>RF1_BACC1</name>
<sequence>MLDRLQAVENRYEKLNELLSDPAIISDSNKLREYSKEQSDIQETVEVYREYKDVREQLKDAKAMLEDKLDAEMREMVKEEVSELESQEKTLSERLKILLVPKDPNDDKNVIVEVRGAAGGDEAALFAGDLYRMYSRYAEVQGWKTEIIEASYTELGGYKEIIFMINGKGAFAKLKFENGAHRVQRVPETESGGRIHTSTATVAVLPEAEEVEIDIHEKDVRVDTFASSGPGGQSVNTTMSAVRLTHLPTGVVVSCQDEKSQIKNKEKAMKVLRARVYDKFRQEAQAEYDQNRKQAVGTGDRSERIRTYNFPQNRVTDHRIGLTIQKLDQILQGKLDDFINALVMEDQAQRMEAAE</sequence>
<reference key="1">
    <citation type="journal article" date="2004" name="Nucleic Acids Res.">
        <title>The genome sequence of Bacillus cereus ATCC 10987 reveals metabolic adaptations and a large plasmid related to Bacillus anthracis pXO1.</title>
        <authorList>
            <person name="Rasko D.A."/>
            <person name="Ravel J."/>
            <person name="Oekstad O.A."/>
            <person name="Helgason E."/>
            <person name="Cer R.Z."/>
            <person name="Jiang L."/>
            <person name="Shores K.A."/>
            <person name="Fouts D.E."/>
            <person name="Tourasse N.J."/>
            <person name="Angiuoli S.V."/>
            <person name="Kolonay J.F."/>
            <person name="Nelson W.C."/>
            <person name="Kolstoe A.-B."/>
            <person name="Fraser C.M."/>
            <person name="Read T.D."/>
        </authorList>
    </citation>
    <scope>NUCLEOTIDE SEQUENCE [LARGE SCALE GENOMIC DNA]</scope>
    <source>
        <strain>ATCC 10987 / NRS 248</strain>
    </source>
</reference>
<evidence type="ECO:0000255" key="1">
    <source>
        <dbReference type="HAMAP-Rule" id="MF_00093"/>
    </source>
</evidence>